<feature type="chain" id="PRO_1000117890" description="Elongation factor P">
    <location>
        <begin position="1"/>
        <end position="185"/>
    </location>
</feature>
<organism>
    <name type="scientific">Gloeothece citriformis (strain PCC 7424)</name>
    <name type="common">Cyanothece sp. (strain PCC 7424)</name>
    <dbReference type="NCBI Taxonomy" id="65393"/>
    <lineage>
        <taxon>Bacteria</taxon>
        <taxon>Bacillati</taxon>
        <taxon>Cyanobacteriota</taxon>
        <taxon>Cyanophyceae</taxon>
        <taxon>Oscillatoriophycideae</taxon>
        <taxon>Chroococcales</taxon>
        <taxon>Aphanothecaceae</taxon>
        <taxon>Gloeothece</taxon>
        <taxon>Gloeothece citriformis</taxon>
    </lineage>
</organism>
<evidence type="ECO:0000255" key="1">
    <source>
        <dbReference type="HAMAP-Rule" id="MF_00141"/>
    </source>
</evidence>
<protein>
    <recommendedName>
        <fullName evidence="1">Elongation factor P</fullName>
        <shortName evidence="1">EF-P</shortName>
    </recommendedName>
</protein>
<comment type="function">
    <text evidence="1">Involved in peptide bond synthesis. Stimulates efficient translation and peptide-bond synthesis on native or reconstituted 70S ribosomes in vitro. Probably functions indirectly by altering the affinity of the ribosome for aminoacyl-tRNA, thus increasing their reactivity as acceptors for peptidyl transferase.</text>
</comment>
<comment type="pathway">
    <text evidence="1">Protein biosynthesis; polypeptide chain elongation.</text>
</comment>
<comment type="subcellular location">
    <subcellularLocation>
        <location evidence="1">Cytoplasm</location>
    </subcellularLocation>
</comment>
<comment type="similarity">
    <text evidence="1">Belongs to the elongation factor P family.</text>
</comment>
<keyword id="KW-0963">Cytoplasm</keyword>
<keyword id="KW-0251">Elongation factor</keyword>
<keyword id="KW-0648">Protein biosynthesis</keyword>
<keyword id="KW-1185">Reference proteome</keyword>
<gene>
    <name evidence="1" type="primary">efp</name>
    <name type="ordered locus">PCC7424_5084</name>
</gene>
<reference key="1">
    <citation type="journal article" date="2011" name="MBio">
        <title>Novel metabolic attributes of the genus Cyanothece, comprising a group of unicellular nitrogen-fixing Cyanobacteria.</title>
        <authorList>
            <person name="Bandyopadhyay A."/>
            <person name="Elvitigala T."/>
            <person name="Welsh E."/>
            <person name="Stockel J."/>
            <person name="Liberton M."/>
            <person name="Min H."/>
            <person name="Sherman L.A."/>
            <person name="Pakrasi H.B."/>
        </authorList>
    </citation>
    <scope>NUCLEOTIDE SEQUENCE [LARGE SCALE GENOMIC DNA]</scope>
    <source>
        <strain>PCC 7424</strain>
    </source>
</reference>
<name>EFP_GLOC7</name>
<sequence>MISSNDFRPGVSIELEGSIWKVVEFLHVKPGKGSAFVRTTLKNVQTGKVLERTFRAGETVPQATIEKRTMQHTYKEGEQFVFMDMETYEEARLNPEQLGDGAKYIKENMEVNVLYWGEQVLNIELPTSVILEVTDTDPGVKGDTATGGSKPAIVETGAQIMVPLFISIGERIKVDTRDGSYLGRE</sequence>
<dbReference type="EMBL" id="CP001291">
    <property type="protein sequence ID" value="ACK73435.1"/>
    <property type="molecule type" value="Genomic_DNA"/>
</dbReference>
<dbReference type="RefSeq" id="WP_015957015.1">
    <property type="nucleotide sequence ID" value="NC_011729.1"/>
</dbReference>
<dbReference type="SMR" id="B7KGU8"/>
<dbReference type="STRING" id="65393.PCC7424_5084"/>
<dbReference type="KEGG" id="cyc:PCC7424_5084"/>
<dbReference type="eggNOG" id="COG0231">
    <property type="taxonomic scope" value="Bacteria"/>
</dbReference>
<dbReference type="HOGENOM" id="CLU_074944_0_1_3"/>
<dbReference type="OrthoDB" id="9801844at2"/>
<dbReference type="UniPathway" id="UPA00345"/>
<dbReference type="Proteomes" id="UP000002384">
    <property type="component" value="Chromosome"/>
</dbReference>
<dbReference type="GO" id="GO:0005737">
    <property type="term" value="C:cytoplasm"/>
    <property type="evidence" value="ECO:0007669"/>
    <property type="project" value="UniProtKB-SubCell"/>
</dbReference>
<dbReference type="GO" id="GO:0003746">
    <property type="term" value="F:translation elongation factor activity"/>
    <property type="evidence" value="ECO:0007669"/>
    <property type="project" value="UniProtKB-UniRule"/>
</dbReference>
<dbReference type="GO" id="GO:0043043">
    <property type="term" value="P:peptide biosynthetic process"/>
    <property type="evidence" value="ECO:0007669"/>
    <property type="project" value="InterPro"/>
</dbReference>
<dbReference type="CDD" id="cd04470">
    <property type="entry name" value="S1_EF-P_repeat_1"/>
    <property type="match status" value="1"/>
</dbReference>
<dbReference type="CDD" id="cd05794">
    <property type="entry name" value="S1_EF-P_repeat_2"/>
    <property type="match status" value="1"/>
</dbReference>
<dbReference type="FunFam" id="2.30.30.30:FF:000003">
    <property type="entry name" value="Elongation factor P"/>
    <property type="match status" value="1"/>
</dbReference>
<dbReference type="FunFam" id="2.40.50.140:FF:000004">
    <property type="entry name" value="Elongation factor P"/>
    <property type="match status" value="1"/>
</dbReference>
<dbReference type="FunFam" id="2.40.50.140:FF:000009">
    <property type="entry name" value="Elongation factor P"/>
    <property type="match status" value="1"/>
</dbReference>
<dbReference type="Gene3D" id="2.30.30.30">
    <property type="match status" value="1"/>
</dbReference>
<dbReference type="Gene3D" id="2.40.50.140">
    <property type="entry name" value="Nucleic acid-binding proteins"/>
    <property type="match status" value="2"/>
</dbReference>
<dbReference type="HAMAP" id="MF_00141">
    <property type="entry name" value="EF_P"/>
    <property type="match status" value="1"/>
</dbReference>
<dbReference type="InterPro" id="IPR015365">
    <property type="entry name" value="Elong-fact-P_C"/>
</dbReference>
<dbReference type="InterPro" id="IPR012340">
    <property type="entry name" value="NA-bd_OB-fold"/>
</dbReference>
<dbReference type="InterPro" id="IPR014722">
    <property type="entry name" value="Rib_uL2_dom2"/>
</dbReference>
<dbReference type="InterPro" id="IPR020599">
    <property type="entry name" value="Transl_elong_fac_P/YeiP"/>
</dbReference>
<dbReference type="InterPro" id="IPR013185">
    <property type="entry name" value="Transl_elong_KOW-like"/>
</dbReference>
<dbReference type="InterPro" id="IPR001059">
    <property type="entry name" value="Transl_elong_P/YeiP_cen"/>
</dbReference>
<dbReference type="InterPro" id="IPR013852">
    <property type="entry name" value="Transl_elong_P/YeiP_CS"/>
</dbReference>
<dbReference type="InterPro" id="IPR011768">
    <property type="entry name" value="Transl_elongation_fac_P"/>
</dbReference>
<dbReference type="InterPro" id="IPR008991">
    <property type="entry name" value="Translation_prot_SH3-like_sf"/>
</dbReference>
<dbReference type="NCBIfam" id="TIGR00038">
    <property type="entry name" value="efp"/>
    <property type="match status" value="1"/>
</dbReference>
<dbReference type="NCBIfam" id="NF001810">
    <property type="entry name" value="PRK00529.1"/>
    <property type="match status" value="1"/>
</dbReference>
<dbReference type="PANTHER" id="PTHR30053">
    <property type="entry name" value="ELONGATION FACTOR P"/>
    <property type="match status" value="1"/>
</dbReference>
<dbReference type="PANTHER" id="PTHR30053:SF12">
    <property type="entry name" value="ELONGATION FACTOR P (EF-P) FAMILY PROTEIN"/>
    <property type="match status" value="1"/>
</dbReference>
<dbReference type="Pfam" id="PF01132">
    <property type="entry name" value="EFP"/>
    <property type="match status" value="1"/>
</dbReference>
<dbReference type="Pfam" id="PF08207">
    <property type="entry name" value="EFP_N"/>
    <property type="match status" value="1"/>
</dbReference>
<dbReference type="Pfam" id="PF09285">
    <property type="entry name" value="Elong-fact-P_C"/>
    <property type="match status" value="1"/>
</dbReference>
<dbReference type="PIRSF" id="PIRSF005901">
    <property type="entry name" value="EF-P"/>
    <property type="match status" value="1"/>
</dbReference>
<dbReference type="SMART" id="SM01185">
    <property type="entry name" value="EFP"/>
    <property type="match status" value="1"/>
</dbReference>
<dbReference type="SMART" id="SM00841">
    <property type="entry name" value="Elong-fact-P_C"/>
    <property type="match status" value="1"/>
</dbReference>
<dbReference type="SUPFAM" id="SSF50249">
    <property type="entry name" value="Nucleic acid-binding proteins"/>
    <property type="match status" value="2"/>
</dbReference>
<dbReference type="SUPFAM" id="SSF50104">
    <property type="entry name" value="Translation proteins SH3-like domain"/>
    <property type="match status" value="1"/>
</dbReference>
<dbReference type="PROSITE" id="PS01275">
    <property type="entry name" value="EFP"/>
    <property type="match status" value="1"/>
</dbReference>
<proteinExistence type="inferred from homology"/>
<accession>B7KGU8</accession>